<proteinExistence type="evidence at protein level"/>
<name>GLYCO_IRKV</name>
<evidence type="ECO:0000250" key="1"/>
<evidence type="ECO:0000255" key="2"/>
<evidence type="ECO:0000256" key="3">
    <source>
        <dbReference type="SAM" id="MobiDB-lite"/>
    </source>
</evidence>
<evidence type="ECO:0000305" key="4"/>
<keyword id="KW-0325">Glycoprotein</keyword>
<keyword id="KW-0449">Lipoprotein</keyword>
<keyword id="KW-0472">Membrane</keyword>
<keyword id="KW-0564">Palmitate</keyword>
<keyword id="KW-0732">Signal</keyword>
<keyword id="KW-0812">Transmembrane</keyword>
<keyword id="KW-1133">Transmembrane helix</keyword>
<keyword id="KW-0261">Viral envelope protein</keyword>
<keyword id="KW-0946">Virion</keyword>
<sequence length="524" mass="58831">MSLLTAVIAFLFISTFCSGKFPIYTIPDKIGPWSPIDINHLSCPNNLEVEDEGCTTLTAFNYMELKVGYITSIKVDGFTCTGVVTEAETYTNFVGYVTTTFKRKHFRPNVSACRAAFSWKTAGDPRYEESLHNPYPDSHWLRTVTTTKESLLIISPSVVDMDAYDKTLYSKMFPNGKCFPPISDSPFCSTNHDYTLWLPEKEKLSMSCNIFVSSKGKKATKDGRLCGFVDERGLYKSLKGACKLKLCGMAGMRLMDGSWVSLQRADAPEWCPPGALVNVHDFHSDEIAHFVVEELIKKREECLDTLETILTTKSISFRRLSHFRKLVPGLGKAYTLINNTLMEAEAHYKSIREWKEIIPSKGCLKAGGRCHPHYDGIFFNGIILGPNGDVLIPEMQSSLLQQHIELLESSMIPLRHPLADSSAIFRSDNEAEDFVDVHLPDTQKQVSDIDLGFPEWKRYFLIGVSAIALFSLAIIIAVCCRKFKRRKRPKPGPIELVRKVSVTSQSGKVVPSWESYKEGATSQP</sequence>
<comment type="function">
    <text evidence="1">Attaches the virus to host cellular receptor, inducing endocytosis of the virion. In the endosome, the acidic pH induces conformational changes in the glycoprotein trimer, which trigger fusion between virus and cell membrane. There is convincing in vitro evidence that the muscular form of the nicotinic acetylcholine receptor (nAChR), the neuronal cell adhesion molecule (NCAM), and the p75 neurotrophin receptor (p75NTR) bind glycoprotein and thereby facilitate rabies virus entry into cells (By similarity).</text>
</comment>
<comment type="subunit">
    <text evidence="1">Homotrimer. Interacts with matrix protein (By similarity).</text>
</comment>
<comment type="subcellular location">
    <subcellularLocation>
        <location evidence="4">Virion membrane</location>
        <topology evidence="4">Single-pass type I membrane protein</topology>
    </subcellularLocation>
</comment>
<comment type="PTM">
    <text evidence="1">Glycosylated and palmitoylated by host. Glycosylation is crucial for glycoprotein export at the cell surface (By similarity).</text>
</comment>
<comment type="biotechnology">
    <text>Primary surface antigen capable of inducing and reacting with virus-neutralizing antibodies. Almost all human and veterinary vaccines are based on the functional aspects of the G protein.</text>
</comment>
<comment type="miscellaneous">
    <text evidence="1">Arg-352 is highly involved in rabies virus pathogenicity. Its mutation dramatically attenuates the virus (By similarity).</text>
</comment>
<comment type="similarity">
    <text evidence="4">Belongs to the lyssavirus glycoprotein family.</text>
</comment>
<dbReference type="EMBL" id="EF614260">
    <property type="protein sequence ID" value="AAR03480.1"/>
    <property type="molecule type" value="mRNA"/>
</dbReference>
<dbReference type="RefSeq" id="YP_007641400.1">
    <property type="nucleotide sequence ID" value="NC_020809.1"/>
</dbReference>
<dbReference type="SMR" id="Q5VKP3"/>
<dbReference type="GlyCosmos" id="Q5VKP3">
    <property type="glycosylation" value="1 site, No reported glycans"/>
</dbReference>
<dbReference type="GeneID" id="14857934"/>
<dbReference type="KEGG" id="vg:14857934"/>
<dbReference type="OrthoDB" id="21147at10239"/>
<dbReference type="Proteomes" id="UP000008381">
    <property type="component" value="Segment"/>
</dbReference>
<dbReference type="GO" id="GO:0016020">
    <property type="term" value="C:membrane"/>
    <property type="evidence" value="ECO:0007669"/>
    <property type="project" value="UniProtKB-KW"/>
</dbReference>
<dbReference type="GO" id="GO:0019031">
    <property type="term" value="C:viral envelope"/>
    <property type="evidence" value="ECO:0007669"/>
    <property type="project" value="UniProtKB-KW"/>
</dbReference>
<dbReference type="GO" id="GO:0055036">
    <property type="term" value="C:virion membrane"/>
    <property type="evidence" value="ECO:0007669"/>
    <property type="project" value="UniProtKB-SubCell"/>
</dbReference>
<dbReference type="Gene3D" id="2.30.29.130">
    <property type="match status" value="1"/>
</dbReference>
<dbReference type="InterPro" id="IPR055448">
    <property type="entry name" value="PH_Rhabdo_glycop"/>
</dbReference>
<dbReference type="InterPro" id="IPR055447">
    <property type="entry name" value="Rhabdo_glycop_CD"/>
</dbReference>
<dbReference type="InterPro" id="IPR001903">
    <property type="entry name" value="Rhabdo_glycop_FD"/>
</dbReference>
<dbReference type="Pfam" id="PF24834">
    <property type="entry name" value="PH_Rhabdo_glycop"/>
    <property type="match status" value="1"/>
</dbReference>
<dbReference type="Pfam" id="PF24833">
    <property type="entry name" value="Rhabdo_glycop_CD"/>
    <property type="match status" value="1"/>
</dbReference>
<dbReference type="Pfam" id="PF00974">
    <property type="entry name" value="Rhabdo_glycop_FD"/>
    <property type="match status" value="1"/>
</dbReference>
<dbReference type="SUPFAM" id="SSF161008">
    <property type="entry name" value="Viral glycoprotein ectodomain-like"/>
    <property type="match status" value="1"/>
</dbReference>
<protein>
    <recommendedName>
        <fullName>Glycoprotein</fullName>
    </recommendedName>
</protein>
<accession>Q5VKP3</accession>
<feature type="signal peptide" evidence="2">
    <location>
        <begin position="1"/>
        <end position="19"/>
    </location>
</feature>
<feature type="chain" id="PRO_0000295795" description="Glycoprotein">
    <location>
        <begin position="20"/>
        <end position="524"/>
    </location>
</feature>
<feature type="topological domain" description="Virion surface" evidence="2">
    <location>
        <begin position="20"/>
        <end position="459"/>
    </location>
</feature>
<feature type="transmembrane region" description="Helical" evidence="2">
    <location>
        <begin position="460"/>
        <end position="480"/>
    </location>
</feature>
<feature type="topological domain" description="Intravirion" evidence="2">
    <location>
        <begin position="481"/>
        <end position="524"/>
    </location>
</feature>
<feature type="region of interest" description="Disordered" evidence="3">
    <location>
        <begin position="504"/>
        <end position="524"/>
    </location>
</feature>
<feature type="lipid moiety-binding region" description="S-palmitoyl cysteine; by host" evidence="1">
    <location>
        <position position="480"/>
    </location>
</feature>
<feature type="glycosylation site" description="N-linked (GlcNAc...) asparagine; by host" evidence="1">
    <location>
        <position position="338"/>
    </location>
</feature>
<gene>
    <name type="primary">G</name>
</gene>
<organism>
    <name type="scientific">Irkut virus</name>
    <name type="common">IRKV</name>
    <dbReference type="NCBI Taxonomy" id="249583"/>
    <lineage>
        <taxon>Viruses</taxon>
        <taxon>Riboviria</taxon>
        <taxon>Orthornavirae</taxon>
        <taxon>Negarnaviricota</taxon>
        <taxon>Haploviricotina</taxon>
        <taxon>Monjiviricetes</taxon>
        <taxon>Mononegavirales</taxon>
        <taxon>Rhabdoviridae</taxon>
        <taxon>Alpharhabdovirinae</taxon>
        <taxon>Lyssavirus</taxon>
    </lineage>
</organism>
<reference key="1">
    <citation type="journal article" date="2005" name="Virus Res.">
        <title>Phylogenetic relationships of Irkut and West Caucasian bat viruses within the Lyssavirus genus and suggested quantitative criteria based on the N gene sequence for lyssavirus genotype definition.</title>
        <authorList>
            <person name="Kuzmin I.V."/>
            <person name="Hughes G.J."/>
            <person name="Botvinkin A.D."/>
            <person name="Orciari L.A."/>
            <person name="Rupprecht C.E."/>
        </authorList>
    </citation>
    <scope>NUCLEOTIDE SEQUENCE [MRNA]</scope>
</reference>
<reference key="2">
    <citation type="journal article" date="2008" name="Virus Res.">
        <title>Complete genomes of Aravan, Khujand, Irkut and West Caucasian bat viruses, with special attention to the polymerase gene and non-coding regions.</title>
        <authorList>
            <person name="Kuzmin I.V."/>
            <person name="Wu X."/>
            <person name="Tordo N."/>
            <person name="Rupprecht C.E."/>
        </authorList>
    </citation>
    <scope>NUCLEOTIDE SEQUENCE [GENOMIC RNA]</scope>
</reference>
<organismHost>
    <name type="scientific">Murina leucogaster</name>
    <name type="common">Greater tube-nosed bat</name>
    <dbReference type="NCBI Taxonomy" id="187017"/>
</organismHost>